<evidence type="ECO:0000255" key="1">
    <source>
        <dbReference type="HAMAP-Rule" id="MF_01013"/>
    </source>
</evidence>
<name>HIS6_ACICJ</name>
<accession>A5FYE5</accession>
<gene>
    <name evidence="1" type="primary">hisF</name>
    <name type="ordered locus">Acry_1417</name>
</gene>
<comment type="function">
    <text evidence="1">IGPS catalyzes the conversion of PRFAR and glutamine to IGP, AICAR and glutamate. The HisF subunit catalyzes the cyclization activity that produces IGP and AICAR from PRFAR using the ammonia provided by the HisH subunit.</text>
</comment>
<comment type="catalytic activity">
    <reaction evidence="1">
        <text>5-[(5-phospho-1-deoxy-D-ribulos-1-ylimino)methylamino]-1-(5-phospho-beta-D-ribosyl)imidazole-4-carboxamide + L-glutamine = D-erythro-1-(imidazol-4-yl)glycerol 3-phosphate + 5-amino-1-(5-phospho-beta-D-ribosyl)imidazole-4-carboxamide + L-glutamate + H(+)</text>
        <dbReference type="Rhea" id="RHEA:24793"/>
        <dbReference type="ChEBI" id="CHEBI:15378"/>
        <dbReference type="ChEBI" id="CHEBI:29985"/>
        <dbReference type="ChEBI" id="CHEBI:58278"/>
        <dbReference type="ChEBI" id="CHEBI:58359"/>
        <dbReference type="ChEBI" id="CHEBI:58475"/>
        <dbReference type="ChEBI" id="CHEBI:58525"/>
        <dbReference type="EC" id="4.3.2.10"/>
    </reaction>
</comment>
<comment type="pathway">
    <text evidence="1">Amino-acid biosynthesis; L-histidine biosynthesis; L-histidine from 5-phospho-alpha-D-ribose 1-diphosphate: step 5/9.</text>
</comment>
<comment type="subunit">
    <text evidence="1">Heterodimer of HisH and HisF.</text>
</comment>
<comment type="subcellular location">
    <subcellularLocation>
        <location evidence="1">Cytoplasm</location>
    </subcellularLocation>
</comment>
<comment type="similarity">
    <text evidence="1">Belongs to the HisA/HisF family.</text>
</comment>
<dbReference type="EC" id="4.3.2.10" evidence="1"/>
<dbReference type="EMBL" id="CP000697">
    <property type="protein sequence ID" value="ABQ30627.1"/>
    <property type="molecule type" value="Genomic_DNA"/>
</dbReference>
<dbReference type="RefSeq" id="WP_011942226.1">
    <property type="nucleotide sequence ID" value="NC_009484.1"/>
</dbReference>
<dbReference type="SMR" id="A5FYE5"/>
<dbReference type="STRING" id="349163.Acry_1417"/>
<dbReference type="KEGG" id="acr:Acry_1417"/>
<dbReference type="eggNOG" id="COG0107">
    <property type="taxonomic scope" value="Bacteria"/>
</dbReference>
<dbReference type="HOGENOM" id="CLU_048577_4_0_5"/>
<dbReference type="UniPathway" id="UPA00031">
    <property type="reaction ID" value="UER00010"/>
</dbReference>
<dbReference type="Proteomes" id="UP000000245">
    <property type="component" value="Chromosome"/>
</dbReference>
<dbReference type="GO" id="GO:0005737">
    <property type="term" value="C:cytoplasm"/>
    <property type="evidence" value="ECO:0007669"/>
    <property type="project" value="UniProtKB-SubCell"/>
</dbReference>
<dbReference type="GO" id="GO:0000107">
    <property type="term" value="F:imidazoleglycerol-phosphate synthase activity"/>
    <property type="evidence" value="ECO:0007669"/>
    <property type="project" value="UniProtKB-UniRule"/>
</dbReference>
<dbReference type="GO" id="GO:0016829">
    <property type="term" value="F:lyase activity"/>
    <property type="evidence" value="ECO:0007669"/>
    <property type="project" value="UniProtKB-KW"/>
</dbReference>
<dbReference type="GO" id="GO:0000105">
    <property type="term" value="P:L-histidine biosynthetic process"/>
    <property type="evidence" value="ECO:0007669"/>
    <property type="project" value="UniProtKB-UniRule"/>
</dbReference>
<dbReference type="CDD" id="cd04731">
    <property type="entry name" value="HisF"/>
    <property type="match status" value="1"/>
</dbReference>
<dbReference type="FunFam" id="3.20.20.70:FF:000006">
    <property type="entry name" value="Imidazole glycerol phosphate synthase subunit HisF"/>
    <property type="match status" value="1"/>
</dbReference>
<dbReference type="Gene3D" id="3.20.20.70">
    <property type="entry name" value="Aldolase class I"/>
    <property type="match status" value="1"/>
</dbReference>
<dbReference type="HAMAP" id="MF_01013">
    <property type="entry name" value="HisF"/>
    <property type="match status" value="1"/>
</dbReference>
<dbReference type="InterPro" id="IPR013785">
    <property type="entry name" value="Aldolase_TIM"/>
</dbReference>
<dbReference type="InterPro" id="IPR006062">
    <property type="entry name" value="His_biosynth"/>
</dbReference>
<dbReference type="InterPro" id="IPR004651">
    <property type="entry name" value="HisF"/>
</dbReference>
<dbReference type="InterPro" id="IPR050064">
    <property type="entry name" value="IGPS_HisA/HisF"/>
</dbReference>
<dbReference type="InterPro" id="IPR011060">
    <property type="entry name" value="RibuloseP-bd_barrel"/>
</dbReference>
<dbReference type="NCBIfam" id="TIGR00735">
    <property type="entry name" value="hisF"/>
    <property type="match status" value="1"/>
</dbReference>
<dbReference type="PANTHER" id="PTHR21235:SF2">
    <property type="entry name" value="IMIDAZOLE GLYCEROL PHOSPHATE SYNTHASE HISHF"/>
    <property type="match status" value="1"/>
</dbReference>
<dbReference type="PANTHER" id="PTHR21235">
    <property type="entry name" value="IMIDAZOLE GLYCEROL PHOSPHATE SYNTHASE SUBUNIT HISF/H IGP SYNTHASE SUBUNIT HISF/H"/>
    <property type="match status" value="1"/>
</dbReference>
<dbReference type="Pfam" id="PF00977">
    <property type="entry name" value="His_biosynth"/>
    <property type="match status" value="1"/>
</dbReference>
<dbReference type="SUPFAM" id="SSF51366">
    <property type="entry name" value="Ribulose-phoshate binding barrel"/>
    <property type="match status" value="1"/>
</dbReference>
<protein>
    <recommendedName>
        <fullName evidence="1">Imidazole glycerol phosphate synthase subunit HisF</fullName>
        <ecNumber evidence="1">4.3.2.10</ecNumber>
    </recommendedName>
    <alternativeName>
        <fullName evidence="1">IGP synthase cyclase subunit</fullName>
    </alternativeName>
    <alternativeName>
        <fullName evidence="1">IGP synthase subunit HisF</fullName>
    </alternativeName>
    <alternativeName>
        <fullName evidence="1">ImGP synthase subunit HisF</fullName>
        <shortName evidence="1">IGPS subunit HisF</shortName>
    </alternativeName>
</protein>
<sequence length="254" mass="26523">MLKLRVIPCLDVKDGRVVKGVNFVSLRDAGDPVEQAVVYDRAGADELTFLDITASHENRDTIIDVVGRTAARVFLPLTVGGGIRSTDDMRRLLLAGADKCSINSAAISRPDFINEAARKFGSQCVVVAVDARRGGEGWEVFTHGGRRGTGIDAVGWCAEMAARGAGEILLTSMDRDGTGLGFDLDLLRAVTARVNIPVIASGGVGTLAHFVEGAEAGATGLLAASVFHFGQFTIAEVKAALAAAGLPVRPVASH</sequence>
<organism>
    <name type="scientific">Acidiphilium cryptum (strain JF-5)</name>
    <dbReference type="NCBI Taxonomy" id="349163"/>
    <lineage>
        <taxon>Bacteria</taxon>
        <taxon>Pseudomonadati</taxon>
        <taxon>Pseudomonadota</taxon>
        <taxon>Alphaproteobacteria</taxon>
        <taxon>Acetobacterales</taxon>
        <taxon>Acidocellaceae</taxon>
        <taxon>Acidiphilium</taxon>
    </lineage>
</organism>
<keyword id="KW-0028">Amino-acid biosynthesis</keyword>
<keyword id="KW-0963">Cytoplasm</keyword>
<keyword id="KW-0368">Histidine biosynthesis</keyword>
<keyword id="KW-0456">Lyase</keyword>
<keyword id="KW-1185">Reference proteome</keyword>
<feature type="chain" id="PRO_1000063014" description="Imidazole glycerol phosphate synthase subunit HisF">
    <location>
        <begin position="1"/>
        <end position="254"/>
    </location>
</feature>
<feature type="active site" evidence="1">
    <location>
        <position position="11"/>
    </location>
</feature>
<feature type="active site" evidence="1">
    <location>
        <position position="130"/>
    </location>
</feature>
<reference key="1">
    <citation type="submission" date="2007-05" db="EMBL/GenBank/DDBJ databases">
        <title>Complete sequence of chromosome of Acidiphilium cryptum JF-5.</title>
        <authorList>
            <consortium name="US DOE Joint Genome Institute"/>
            <person name="Copeland A."/>
            <person name="Lucas S."/>
            <person name="Lapidus A."/>
            <person name="Barry K."/>
            <person name="Detter J.C."/>
            <person name="Glavina del Rio T."/>
            <person name="Hammon N."/>
            <person name="Israni S."/>
            <person name="Dalin E."/>
            <person name="Tice H."/>
            <person name="Pitluck S."/>
            <person name="Sims D."/>
            <person name="Brettin T."/>
            <person name="Bruce D."/>
            <person name="Han C."/>
            <person name="Schmutz J."/>
            <person name="Larimer F."/>
            <person name="Land M."/>
            <person name="Hauser L."/>
            <person name="Kyrpides N."/>
            <person name="Kim E."/>
            <person name="Magnuson T."/>
            <person name="Richardson P."/>
        </authorList>
    </citation>
    <scope>NUCLEOTIDE SEQUENCE [LARGE SCALE GENOMIC DNA]</scope>
    <source>
        <strain>JF-5</strain>
    </source>
</reference>
<proteinExistence type="inferred from homology"/>